<comment type="function">
    <text evidence="5 6">Catalyzes the oxidation of cytokinins, a family of N(6)-substituted adenine derivatives that are plant hormones, where the substituent is an isopentenyl group (PubMed:14555694). Modulates asymmetric cytokinin signaling in emerged lateral roots (PubMed:31387989). Its activity determines cell elongation and number in emerged lateral roots and defines angular growth of lateral roots (PubMed:31387989).</text>
</comment>
<comment type="catalytic activity">
    <reaction evidence="5">
        <text>N(6)-dimethylallyladenine + A + H2O = 3-methyl-2-butenal + adenine + AH2</text>
        <dbReference type="Rhea" id="RHEA:13625"/>
        <dbReference type="ChEBI" id="CHEBI:13193"/>
        <dbReference type="ChEBI" id="CHEBI:15377"/>
        <dbReference type="ChEBI" id="CHEBI:15825"/>
        <dbReference type="ChEBI" id="CHEBI:16708"/>
        <dbReference type="ChEBI" id="CHEBI:17499"/>
        <dbReference type="ChEBI" id="CHEBI:17660"/>
        <dbReference type="EC" id="1.5.99.12"/>
    </reaction>
</comment>
<comment type="cofactor">
    <cofactor evidence="1">
        <name>FAD</name>
        <dbReference type="ChEBI" id="CHEBI:57692"/>
    </cofactor>
</comment>
<comment type="biophysicochemical properties">
    <kinetics>
        <KM evidence="5">0.3 uM for isopentenyladenine</KM>
        <Vmax evidence="5">7.4 nmol/h/mg enzyme</Vmax>
    </kinetics>
</comment>
<comment type="subcellular location">
    <subcellularLocation>
        <location evidence="5">Endoplasmic reticulum</location>
    </subcellularLocation>
    <subcellularLocation>
        <location evidence="5">Secreted</location>
        <location evidence="5">Extracellular space</location>
    </subcellularLocation>
</comment>
<comment type="tissue specificity">
    <text evidence="5">Expressed in the shoot apex, in stipules, and occasionally in the most apical part of the inflorescence stems. Not detected in roots.</text>
</comment>
<comment type="similarity">
    <text evidence="7">Belongs to the oxygen-dependent FAD-linked oxidoreductase family.</text>
</comment>
<feature type="signal peptide" evidence="3">
    <location>
        <begin position="1"/>
        <end position="22"/>
    </location>
</feature>
<feature type="chain" id="PRO_0000020419" description="Cytokinin dehydrogenase 2">
    <location>
        <begin position="23"/>
        <end position="501"/>
    </location>
</feature>
<feature type="domain" description="FAD-binding PCMH-type" evidence="4">
    <location>
        <begin position="53"/>
        <end position="226"/>
    </location>
</feature>
<feature type="binding site" evidence="1">
    <location>
        <position position="87"/>
    </location>
    <ligand>
        <name>FAD</name>
        <dbReference type="ChEBI" id="CHEBI:57692"/>
    </ligand>
</feature>
<feature type="binding site" evidence="2">
    <location>
        <position position="89"/>
    </location>
    <ligand>
        <name>FAD</name>
        <dbReference type="ChEBI" id="CHEBI:57692"/>
    </ligand>
</feature>
<feature type="binding site" evidence="2">
    <location>
        <position position="91"/>
    </location>
    <ligand>
        <name>FAD</name>
        <dbReference type="ChEBI" id="CHEBI:57692"/>
    </ligand>
</feature>
<feature type="binding site" evidence="2">
    <location>
        <position position="93"/>
    </location>
    <ligand>
        <name>FAD</name>
        <dbReference type="ChEBI" id="CHEBI:57692"/>
    </ligand>
</feature>
<feature type="binding site" evidence="2">
    <location>
        <position position="97"/>
    </location>
    <ligand>
        <name>FAD</name>
        <dbReference type="ChEBI" id="CHEBI:57692"/>
    </ligand>
</feature>
<feature type="binding site" evidence="2">
    <location>
        <position position="150"/>
    </location>
    <ligand>
        <name>FAD</name>
        <dbReference type="ChEBI" id="CHEBI:57692"/>
    </ligand>
</feature>
<feature type="binding site" evidence="2">
    <location>
        <position position="155"/>
    </location>
    <ligand>
        <name>FAD</name>
        <dbReference type="ChEBI" id="CHEBI:57692"/>
    </ligand>
</feature>
<feature type="binding site" evidence="2">
    <location>
        <position position="161"/>
    </location>
    <ligand>
        <name>FAD</name>
        <dbReference type="ChEBI" id="CHEBI:57692"/>
    </ligand>
</feature>
<feature type="binding site" evidence="2">
    <location>
        <position position="165"/>
    </location>
    <ligand>
        <name>FAD</name>
        <dbReference type="ChEBI" id="CHEBI:57692"/>
    </ligand>
</feature>
<feature type="binding site" evidence="2">
    <location>
        <position position="216"/>
    </location>
    <ligand>
        <name>FAD</name>
        <dbReference type="ChEBI" id="CHEBI:57692"/>
    </ligand>
</feature>
<feature type="binding site" evidence="2">
    <location>
        <position position="460"/>
    </location>
    <ligand>
        <name>FAD</name>
        <dbReference type="ChEBI" id="CHEBI:57692"/>
    </ligand>
</feature>
<feature type="binding site" evidence="2">
    <location>
        <position position="495"/>
    </location>
    <ligand>
        <name>FAD</name>
        <dbReference type="ChEBI" id="CHEBI:57692"/>
    </ligand>
</feature>
<feature type="binding site" evidence="2">
    <location>
        <position position="498"/>
    </location>
    <ligand>
        <name>FAD</name>
        <dbReference type="ChEBI" id="CHEBI:57692"/>
    </ligand>
</feature>
<feature type="modified residue" description="Pros-8alpha-FAD histidine" evidence="2">
    <location>
        <position position="92"/>
    </location>
</feature>
<feature type="glycosylation site" description="N-linked (GlcNAc...) asparagine" evidence="3">
    <location>
        <position position="32"/>
    </location>
</feature>
<feature type="glycosylation site" description="N-linked (GlcNAc...) asparagine" evidence="3">
    <location>
        <position position="51"/>
    </location>
</feature>
<feature type="glycosylation site" description="N-linked (GlcNAc...) asparagine" evidence="3">
    <location>
        <position position="107"/>
    </location>
</feature>
<feature type="sequence conflict" description="In Ref. 1; AAG30905." evidence="7" ref="1">
    <original>G</original>
    <variation>R</variation>
    <location>
        <position position="157"/>
    </location>
</feature>
<gene>
    <name type="primary">CKX2</name>
    <name type="ordered locus">At2g19500</name>
    <name type="ORF">F3P11.10</name>
</gene>
<sequence>MANLRLMITLITVLMITKSSNGIKIDLPKSLNLTLSTDPSIISAASHDFGNITTVTPGGVICPSSTADISRLLQYAANGKSTFQVAARGQGHSLNGQASVSGGVIVNMTCITDVVVSKDKKYADVAAGTLWVDVLKKTAEKGVSPVSWTDYLHITVGGTLSNGGIGGQVFRNGPLVSNVLELDVITGKGEMLTCSRQLNPELFYGVLGGLGQFGIITRARIVLDHAPKRAKWFRMLYSDFTTFTKDQERLISMANDIGVDYLEGQIFLSNGVVDTSFFPPSDQSKVADLVKQHGIIYVLEVAKYYDDPNLPIISKVIDTLTKTLSYLPGFISMHDVAYFDFLNRVHVEENKLRSLGLWELPHPWLNLYVPKSRILDFHNGVVKDILLKQKSASGLALLYPTNRNKWDNRMSAMIPEIDEDVIYIIGLLQSATPKDLPEVESVNEKIIRFCKDSGIKIKQYLMHYTSKEDWIEHFGSKWDDFSKRKDLFDPKKLLSPGQDIF</sequence>
<accession>Q9FUJ3</accession>
<accession>Q9ZUP1</accession>
<name>CKX2_ARATH</name>
<organism>
    <name type="scientific">Arabidopsis thaliana</name>
    <name type="common">Mouse-ear cress</name>
    <dbReference type="NCBI Taxonomy" id="3702"/>
    <lineage>
        <taxon>Eukaryota</taxon>
        <taxon>Viridiplantae</taxon>
        <taxon>Streptophyta</taxon>
        <taxon>Embryophyta</taxon>
        <taxon>Tracheophyta</taxon>
        <taxon>Spermatophyta</taxon>
        <taxon>Magnoliopsida</taxon>
        <taxon>eudicotyledons</taxon>
        <taxon>Gunneridae</taxon>
        <taxon>Pentapetalae</taxon>
        <taxon>rosids</taxon>
        <taxon>malvids</taxon>
        <taxon>Brassicales</taxon>
        <taxon>Brassicaceae</taxon>
        <taxon>Camelineae</taxon>
        <taxon>Arabidopsis</taxon>
    </lineage>
</organism>
<proteinExistence type="evidence at protein level"/>
<evidence type="ECO:0000250" key="1">
    <source>
        <dbReference type="UniProtKB" id="Q9FUJ1"/>
    </source>
</evidence>
<evidence type="ECO:0000250" key="2">
    <source>
        <dbReference type="UniProtKB" id="Q9T0N8"/>
    </source>
</evidence>
<evidence type="ECO:0000255" key="3"/>
<evidence type="ECO:0000255" key="4">
    <source>
        <dbReference type="PROSITE-ProRule" id="PRU00718"/>
    </source>
</evidence>
<evidence type="ECO:0000269" key="5">
    <source>
    </source>
</evidence>
<evidence type="ECO:0000269" key="6">
    <source>
    </source>
</evidence>
<evidence type="ECO:0000305" key="7"/>
<keyword id="KW-0256">Endoplasmic reticulum</keyword>
<keyword id="KW-0274">FAD</keyword>
<keyword id="KW-0285">Flavoprotein</keyword>
<keyword id="KW-0325">Glycoprotein</keyword>
<keyword id="KW-0560">Oxidoreductase</keyword>
<keyword id="KW-1185">Reference proteome</keyword>
<keyword id="KW-0964">Secreted</keyword>
<keyword id="KW-0732">Signal</keyword>
<dbReference type="EC" id="1.5.99.12" evidence="5"/>
<dbReference type="EMBL" id="AF303978">
    <property type="protein sequence ID" value="AAG30905.1"/>
    <property type="molecule type" value="mRNA"/>
</dbReference>
<dbReference type="EMBL" id="AC005917">
    <property type="protein sequence ID" value="AAD10149.2"/>
    <property type="molecule type" value="Genomic_DNA"/>
</dbReference>
<dbReference type="EMBL" id="CP002685">
    <property type="protein sequence ID" value="AEC06889.1"/>
    <property type="molecule type" value="Genomic_DNA"/>
</dbReference>
<dbReference type="EMBL" id="BT004107">
    <property type="protein sequence ID" value="AAO42130.1"/>
    <property type="molecule type" value="mRNA"/>
</dbReference>
<dbReference type="EMBL" id="BT005653">
    <property type="protein sequence ID" value="AAO64073.1"/>
    <property type="molecule type" value="mRNA"/>
</dbReference>
<dbReference type="PIR" id="E84577">
    <property type="entry name" value="E84577"/>
</dbReference>
<dbReference type="RefSeq" id="NP_565455.1">
    <property type="nucleotide sequence ID" value="NM_127508.2"/>
</dbReference>
<dbReference type="SMR" id="Q9FUJ3"/>
<dbReference type="FunCoup" id="Q9FUJ3">
    <property type="interactions" value="10"/>
</dbReference>
<dbReference type="STRING" id="3702.Q9FUJ3"/>
<dbReference type="BindingDB" id="Q9FUJ3"/>
<dbReference type="ChEMBL" id="CHEMBL6133"/>
<dbReference type="GlyCosmos" id="Q9FUJ3">
    <property type="glycosylation" value="3 sites, No reported glycans"/>
</dbReference>
<dbReference type="GlyGen" id="Q9FUJ3">
    <property type="glycosylation" value="4 sites"/>
</dbReference>
<dbReference type="iPTMnet" id="Q9FUJ3"/>
<dbReference type="PaxDb" id="3702-AT2G19500.1"/>
<dbReference type="ProteomicsDB" id="222613"/>
<dbReference type="EnsemblPlants" id="AT2G19500.1">
    <property type="protein sequence ID" value="AT2G19500.1"/>
    <property type="gene ID" value="AT2G19500"/>
</dbReference>
<dbReference type="GeneID" id="816469"/>
<dbReference type="Gramene" id="AT2G19500.1">
    <property type="protein sequence ID" value="AT2G19500.1"/>
    <property type="gene ID" value="AT2G19500"/>
</dbReference>
<dbReference type="KEGG" id="ath:AT2G19500"/>
<dbReference type="Araport" id="AT2G19500"/>
<dbReference type="TAIR" id="AT2G19500">
    <property type="gene designation" value="CKX2"/>
</dbReference>
<dbReference type="eggNOG" id="KOG1231">
    <property type="taxonomic scope" value="Eukaryota"/>
</dbReference>
<dbReference type="HOGENOM" id="CLU_024955_1_0_1"/>
<dbReference type="InParanoid" id="Q9FUJ3"/>
<dbReference type="OMA" id="FRMLYSD"/>
<dbReference type="PhylomeDB" id="Q9FUJ3"/>
<dbReference type="BioCyc" id="ARA:AT2G19500-MONOMER"/>
<dbReference type="BioCyc" id="MetaCyc:AT2G19500-MONOMER"/>
<dbReference type="BRENDA" id="1.5.99.12">
    <property type="organism ID" value="399"/>
</dbReference>
<dbReference type="SABIO-RK" id="Q9FUJ3"/>
<dbReference type="PRO" id="PR:Q9FUJ3"/>
<dbReference type="Proteomes" id="UP000006548">
    <property type="component" value="Chromosome 2"/>
</dbReference>
<dbReference type="ExpressionAtlas" id="Q9FUJ3">
    <property type="expression patterns" value="baseline and differential"/>
</dbReference>
<dbReference type="GO" id="GO:0005788">
    <property type="term" value="C:endoplasmic reticulum lumen"/>
    <property type="evidence" value="ECO:0000314"/>
    <property type="project" value="TAIR"/>
</dbReference>
<dbReference type="GO" id="GO:0005576">
    <property type="term" value="C:extracellular region"/>
    <property type="evidence" value="ECO:0007669"/>
    <property type="project" value="UniProtKB-SubCell"/>
</dbReference>
<dbReference type="GO" id="GO:0019139">
    <property type="term" value="F:cytokinin dehydrogenase activity"/>
    <property type="evidence" value="ECO:0000315"/>
    <property type="project" value="TAIR"/>
</dbReference>
<dbReference type="GO" id="GO:0071949">
    <property type="term" value="F:FAD binding"/>
    <property type="evidence" value="ECO:0007669"/>
    <property type="project" value="InterPro"/>
</dbReference>
<dbReference type="GO" id="GO:0008131">
    <property type="term" value="F:primary methylamine oxidase activity"/>
    <property type="evidence" value="ECO:0000314"/>
    <property type="project" value="TAIR"/>
</dbReference>
<dbReference type="GO" id="GO:0009823">
    <property type="term" value="P:cytokinin catabolic process"/>
    <property type="evidence" value="ECO:0000304"/>
    <property type="project" value="TAIR"/>
</dbReference>
<dbReference type="FunFam" id="3.40.462.10:FF:000001">
    <property type="entry name" value="Cytokinin dehydrogenase 2"/>
    <property type="match status" value="1"/>
</dbReference>
<dbReference type="Gene3D" id="3.30.465.10">
    <property type="match status" value="1"/>
</dbReference>
<dbReference type="Gene3D" id="3.40.462.10">
    <property type="entry name" value="FAD-linked oxidases, C-terminal domain"/>
    <property type="match status" value="1"/>
</dbReference>
<dbReference type="Gene3D" id="3.30.43.10">
    <property type="entry name" value="Uridine Diphospho-n-acetylenolpyruvylglucosamine Reductase, domain 2"/>
    <property type="match status" value="1"/>
</dbReference>
<dbReference type="InterPro" id="IPR016170">
    <property type="entry name" value="Cytok_DH_C_sf"/>
</dbReference>
<dbReference type="InterPro" id="IPR015345">
    <property type="entry name" value="Cytokinin_DH_FAD/cytokin-bd"/>
</dbReference>
<dbReference type="InterPro" id="IPR016166">
    <property type="entry name" value="FAD-bd_PCMH"/>
</dbReference>
<dbReference type="InterPro" id="IPR036318">
    <property type="entry name" value="FAD-bd_PCMH-like_sf"/>
</dbReference>
<dbReference type="InterPro" id="IPR016167">
    <property type="entry name" value="FAD-bd_PCMH_sub1"/>
</dbReference>
<dbReference type="InterPro" id="IPR016169">
    <property type="entry name" value="FAD-bd_PCMH_sub2"/>
</dbReference>
<dbReference type="InterPro" id="IPR016164">
    <property type="entry name" value="FAD-linked_Oxase-like_C"/>
</dbReference>
<dbReference type="InterPro" id="IPR050432">
    <property type="entry name" value="FAD-linked_Oxidoreductases_BP"/>
</dbReference>
<dbReference type="InterPro" id="IPR006094">
    <property type="entry name" value="Oxid_FAD_bind_N"/>
</dbReference>
<dbReference type="InterPro" id="IPR006093">
    <property type="entry name" value="Oxy_OxRdtase_FAD_BS"/>
</dbReference>
<dbReference type="PANTHER" id="PTHR13878:SF108">
    <property type="entry name" value="CYTOKININ DEHYDROGENASE 2"/>
    <property type="match status" value="1"/>
</dbReference>
<dbReference type="PANTHER" id="PTHR13878">
    <property type="entry name" value="GULONOLACTONE OXIDASE"/>
    <property type="match status" value="1"/>
</dbReference>
<dbReference type="Pfam" id="PF09265">
    <property type="entry name" value="Cytokin-bind"/>
    <property type="match status" value="1"/>
</dbReference>
<dbReference type="Pfam" id="PF01565">
    <property type="entry name" value="FAD_binding_4"/>
    <property type="match status" value="1"/>
</dbReference>
<dbReference type="SUPFAM" id="SSF56176">
    <property type="entry name" value="FAD-binding/transporter-associated domain-like"/>
    <property type="match status" value="1"/>
</dbReference>
<dbReference type="SUPFAM" id="SSF55103">
    <property type="entry name" value="FAD-linked oxidases, C-terminal domain"/>
    <property type="match status" value="1"/>
</dbReference>
<dbReference type="PROSITE" id="PS51387">
    <property type="entry name" value="FAD_PCMH"/>
    <property type="match status" value="1"/>
</dbReference>
<dbReference type="PROSITE" id="PS00862">
    <property type="entry name" value="OX2_COVAL_FAD"/>
    <property type="match status" value="1"/>
</dbReference>
<protein>
    <recommendedName>
        <fullName>Cytokinin dehydrogenase 2</fullName>
        <ecNumber evidence="5">1.5.99.12</ecNumber>
    </recommendedName>
    <alternativeName>
        <fullName>Cytokinin oxidase 2</fullName>
        <shortName>AtCKX2</shortName>
        <shortName>CKO 2</shortName>
    </alternativeName>
</protein>
<reference key="1">
    <citation type="journal article" date="2001" name="Plant Physiol.">
        <title>Molecular and biochemical characterization of a cytokinin oxidase from maize.</title>
        <authorList>
            <person name="Bilyeu K.D."/>
            <person name="Cole J.L."/>
            <person name="Laskey J.G."/>
            <person name="Riekhof W.R."/>
            <person name="Esparza T.J."/>
            <person name="Kramer M.D."/>
            <person name="Morris R.O."/>
        </authorList>
    </citation>
    <scope>NUCLEOTIDE SEQUENCE [MRNA]</scope>
</reference>
<reference key="2">
    <citation type="journal article" date="1999" name="Nature">
        <title>Sequence and analysis of chromosome 2 of the plant Arabidopsis thaliana.</title>
        <authorList>
            <person name="Lin X."/>
            <person name="Kaul S."/>
            <person name="Rounsley S.D."/>
            <person name="Shea T.P."/>
            <person name="Benito M.-I."/>
            <person name="Town C.D."/>
            <person name="Fujii C.Y."/>
            <person name="Mason T.M."/>
            <person name="Bowman C.L."/>
            <person name="Barnstead M.E."/>
            <person name="Feldblyum T.V."/>
            <person name="Buell C.R."/>
            <person name="Ketchum K.A."/>
            <person name="Lee J.J."/>
            <person name="Ronning C.M."/>
            <person name="Koo H.L."/>
            <person name="Moffat K.S."/>
            <person name="Cronin L.A."/>
            <person name="Shen M."/>
            <person name="Pai G."/>
            <person name="Van Aken S."/>
            <person name="Umayam L."/>
            <person name="Tallon L.J."/>
            <person name="Gill J.E."/>
            <person name="Adams M.D."/>
            <person name="Carrera A.J."/>
            <person name="Creasy T.H."/>
            <person name="Goodman H.M."/>
            <person name="Somerville C.R."/>
            <person name="Copenhaver G.P."/>
            <person name="Preuss D."/>
            <person name="Nierman W.C."/>
            <person name="White O."/>
            <person name="Eisen J.A."/>
            <person name="Salzberg S.L."/>
            <person name="Fraser C.M."/>
            <person name="Venter J.C."/>
        </authorList>
    </citation>
    <scope>NUCLEOTIDE SEQUENCE [LARGE SCALE GENOMIC DNA]</scope>
    <source>
        <strain>cv. Columbia</strain>
    </source>
</reference>
<reference key="3">
    <citation type="journal article" date="2017" name="Plant J.">
        <title>Araport11: a complete reannotation of the Arabidopsis thaliana reference genome.</title>
        <authorList>
            <person name="Cheng C.Y."/>
            <person name="Krishnakumar V."/>
            <person name="Chan A.P."/>
            <person name="Thibaud-Nissen F."/>
            <person name="Schobel S."/>
            <person name="Town C.D."/>
        </authorList>
    </citation>
    <scope>GENOME REANNOTATION</scope>
    <source>
        <strain>cv. Columbia</strain>
    </source>
</reference>
<reference key="4">
    <citation type="journal article" date="2003" name="Science">
        <title>Empirical analysis of transcriptional activity in the Arabidopsis genome.</title>
        <authorList>
            <person name="Yamada K."/>
            <person name="Lim J."/>
            <person name="Dale J.M."/>
            <person name="Chen H."/>
            <person name="Shinn P."/>
            <person name="Palm C.J."/>
            <person name="Southwick A.M."/>
            <person name="Wu H.C."/>
            <person name="Kim C.J."/>
            <person name="Nguyen M."/>
            <person name="Pham P.K."/>
            <person name="Cheuk R.F."/>
            <person name="Karlin-Newmann G."/>
            <person name="Liu S.X."/>
            <person name="Lam B."/>
            <person name="Sakano H."/>
            <person name="Wu T."/>
            <person name="Yu G."/>
            <person name="Miranda M."/>
            <person name="Quach H.L."/>
            <person name="Tripp M."/>
            <person name="Chang C.H."/>
            <person name="Lee J.M."/>
            <person name="Toriumi M.J."/>
            <person name="Chan M.M."/>
            <person name="Tang C.C."/>
            <person name="Onodera C.S."/>
            <person name="Deng J.M."/>
            <person name="Akiyama K."/>
            <person name="Ansari Y."/>
            <person name="Arakawa T."/>
            <person name="Banh J."/>
            <person name="Banno F."/>
            <person name="Bowser L."/>
            <person name="Brooks S.Y."/>
            <person name="Carninci P."/>
            <person name="Chao Q."/>
            <person name="Choy N."/>
            <person name="Enju A."/>
            <person name="Goldsmith A.D."/>
            <person name="Gurjal M."/>
            <person name="Hansen N.F."/>
            <person name="Hayashizaki Y."/>
            <person name="Johnson-Hopson C."/>
            <person name="Hsuan V.W."/>
            <person name="Iida K."/>
            <person name="Karnes M."/>
            <person name="Khan S."/>
            <person name="Koesema E."/>
            <person name="Ishida J."/>
            <person name="Jiang P.X."/>
            <person name="Jones T."/>
            <person name="Kawai J."/>
            <person name="Kamiya A."/>
            <person name="Meyers C."/>
            <person name="Nakajima M."/>
            <person name="Narusaka M."/>
            <person name="Seki M."/>
            <person name="Sakurai T."/>
            <person name="Satou M."/>
            <person name="Tamse R."/>
            <person name="Vaysberg M."/>
            <person name="Wallender E.K."/>
            <person name="Wong C."/>
            <person name="Yamamura Y."/>
            <person name="Yuan S."/>
            <person name="Shinozaki K."/>
            <person name="Davis R.W."/>
            <person name="Theologis A."/>
            <person name="Ecker J.R."/>
        </authorList>
    </citation>
    <scope>NUCLEOTIDE SEQUENCE [LARGE SCALE MRNA]</scope>
    <source>
        <strain>cv. Columbia</strain>
    </source>
</reference>
<reference key="5">
    <citation type="journal article" date="2003" name="Plant Cell">
        <title>Cytokinin-deficient transgenic Arabidopsis plants show multiple developmental alterations indicating opposite functions of cytokinins in the regulation of shoot and root meristem activity.</title>
        <authorList>
            <person name="Werner T."/>
            <person name="Motyka V."/>
            <person name="Laucou V."/>
            <person name="Smets R."/>
            <person name="Van Onckelen H."/>
            <person name="Schmulling T."/>
        </authorList>
    </citation>
    <scope>FUNCTION</scope>
    <scope>BIOPHYSICOCHEMICAL PROPERTIES</scope>
    <scope>SUBCELLULAR LOCATION</scope>
    <scope>TISSUE SPECIFICITY</scope>
    <scope>CATALYTIC ACTIVITY</scope>
</reference>
<reference key="6">
    <citation type="journal article" date="2003" name="J. Plant Res.">
        <title>Structure and function of cytokinin oxidase/dehydrogenase genes of maize, rice, Arabidopsis and other species.</title>
        <authorList>
            <person name="Schmuelling T."/>
            <person name="Werner T."/>
            <person name="Riefler M."/>
            <person name="Krupkova E."/>
            <person name="Bartrina y Manns I."/>
        </authorList>
    </citation>
    <scope>REVIEW</scope>
    <scope>NOMENCLATURE</scope>
</reference>
<reference key="7">
    <citation type="journal article" date="2019" name="Nat. Commun.">
        <title>Cytokinin functions as an asymmetric and anti-gravitropic signal in lateral roots.</title>
        <authorList>
            <person name="Waidmann S."/>
            <person name="Ruiz Rosquete M."/>
            <person name="Schoeller M."/>
            <person name="Sarkel E."/>
            <person name="Lindner H."/>
            <person name="LaRue T."/>
            <person name="Petrik I."/>
            <person name="Duenser K."/>
            <person name="Martopawiro S."/>
            <person name="Sasidharan R."/>
            <person name="Novak O."/>
            <person name="Wabnik K."/>
            <person name="Dinneny J.R."/>
            <person name="Kleine-Vehn J."/>
        </authorList>
    </citation>
    <scope>FUNCTION</scope>
</reference>